<protein>
    <recommendedName>
        <fullName>Somatotropin</fullName>
    </recommendedName>
    <alternativeName>
        <fullName>Growth hormone</fullName>
    </alternativeName>
</protein>
<keyword id="KW-1015">Disulfide bond</keyword>
<keyword id="KW-0372">Hormone</keyword>
<keyword id="KW-0479">Metal-binding</keyword>
<keyword id="KW-0873">Pyrrolidone carboxylic acid</keyword>
<keyword id="KW-1185">Reference proteome</keyword>
<keyword id="KW-0964">Secreted</keyword>
<keyword id="KW-0732">Signal</keyword>
<keyword id="KW-0862">Zinc</keyword>
<name>SOMA_LATCA</name>
<accession>Q01283</accession>
<accession>Q91067</accession>
<sequence length="204" mass="23100">MDRVVLLLSVLSLGVSSQPITDSQRLFSIAVSRVQHLHLLAQRRFSEFESSLQTEEQRQLNKIFLQDFCNSDYIISPIDKHETQRSSVLKLLSISYRLVESWEFSSRSLSGGSAPRDQISPKLSELKTGILLLIRANQDGAEMFSDSSALQLAPYGNYYQSLGADESLRRTYELLACFKKDMHKVETYLTVAKCRLSPEANCTL</sequence>
<feature type="signal peptide" evidence="1">
    <location>
        <begin position="1"/>
        <end position="17"/>
    </location>
</feature>
<feature type="chain" id="PRO_0000033029" description="Somatotropin">
    <location>
        <begin position="18"/>
        <end position="204"/>
    </location>
</feature>
<feature type="binding site" evidence="1">
    <location>
        <position position="36"/>
    </location>
    <ligand>
        <name>Zn(2+)</name>
        <dbReference type="ChEBI" id="CHEBI:29105"/>
    </ligand>
</feature>
<feature type="binding site" evidence="1">
    <location>
        <position position="186"/>
    </location>
    <ligand>
        <name>Zn(2+)</name>
        <dbReference type="ChEBI" id="CHEBI:29105"/>
    </ligand>
</feature>
<feature type="modified residue" description="Pyrrolidone carboxylic acid" evidence="1">
    <location>
        <position position="18"/>
    </location>
</feature>
<feature type="disulfide bond" evidence="1">
    <location>
        <begin position="69"/>
        <end position="177"/>
    </location>
</feature>
<feature type="disulfide bond" evidence="1">
    <location>
        <begin position="194"/>
        <end position="202"/>
    </location>
</feature>
<feature type="sequence conflict" description="In Ref. 1; CAA42022." evidence="2" ref="1">
    <original>QL</original>
    <variation>HV</variation>
    <location>
        <begin position="59"/>
        <end position="60"/>
    </location>
</feature>
<evidence type="ECO:0000250" key="1"/>
<evidence type="ECO:0000305" key="2"/>
<reference key="1">
    <citation type="journal article" date="1991" name="DNA Seq.">
        <title>Molecular cloning and sequencing of Australian black bream Acanthopagrus butcheri and barramundi Lates calcarifer fish growth hormone cDNA using polymerase chain reaction.</title>
        <authorList>
            <person name="Knibb W."/>
            <person name="Robins A."/>
            <person name="Crocker L."/>
            <person name="Rizzon J."/>
            <person name="Heyward A."/>
            <person name="Wells J."/>
        </authorList>
    </citation>
    <scope>NUCLEOTIDE SEQUENCE [MRNA]</scope>
    <source>
        <tissue>Brain</tissue>
    </source>
</reference>
<reference key="2">
    <citation type="journal article" date="1995" name="Gene">
        <title>Cloning of the barramundi growth hormone-encoding gene: a comparative analysis of higher and lower vertebrate GH genes.</title>
        <authorList>
            <person name="Yowe D.L."/>
            <person name="Epping R.J."/>
        </authorList>
    </citation>
    <scope>NUCLEOTIDE SEQUENCE [GENOMIC DNA]</scope>
    <source>
        <tissue>Liver</tissue>
    </source>
</reference>
<gene>
    <name type="primary">gh</name>
</gene>
<organism>
    <name type="scientific">Lates calcarifer</name>
    <name type="common">Barramundi</name>
    <name type="synonym">Holocentrus calcarifer</name>
    <dbReference type="NCBI Taxonomy" id="8187"/>
    <lineage>
        <taxon>Eukaryota</taxon>
        <taxon>Metazoa</taxon>
        <taxon>Chordata</taxon>
        <taxon>Craniata</taxon>
        <taxon>Vertebrata</taxon>
        <taxon>Euteleostomi</taxon>
        <taxon>Actinopterygii</taxon>
        <taxon>Neopterygii</taxon>
        <taxon>Teleostei</taxon>
        <taxon>Neoteleostei</taxon>
        <taxon>Acanthomorphata</taxon>
        <taxon>Carangaria</taxon>
        <taxon>Carangaria incertae sedis</taxon>
        <taxon>Centropomidae</taxon>
        <taxon>Lates</taxon>
    </lineage>
</organism>
<comment type="function">
    <text>Growth hormone plays an important role in growth control and is involved in the regulation of several anabolic processes. Implicated as an osmoregulatory substance important for seawater adaptation.</text>
</comment>
<comment type="subcellular location">
    <subcellularLocation>
        <location>Secreted</location>
    </subcellularLocation>
</comment>
<comment type="similarity">
    <text evidence="2">Belongs to the somatotropin/prolactin family.</text>
</comment>
<proteinExistence type="evidence at transcript level"/>
<dbReference type="EMBL" id="X59378">
    <property type="protein sequence ID" value="CAA42022.1"/>
    <property type="molecule type" value="mRNA"/>
</dbReference>
<dbReference type="EMBL" id="U16816">
    <property type="protein sequence ID" value="AAC59692.1"/>
    <property type="molecule type" value="Genomic_DNA"/>
</dbReference>
<dbReference type="PIR" id="JC4261">
    <property type="entry name" value="JC4261"/>
</dbReference>
<dbReference type="SMR" id="Q01283"/>
<dbReference type="FunCoup" id="Q01283">
    <property type="interactions" value="1923"/>
</dbReference>
<dbReference type="STRING" id="8187.ENSLCAP00010042507"/>
<dbReference type="Ensembl" id="ENSLCAT00010043559.1">
    <property type="protein sequence ID" value="ENSLCAP00010042508.1"/>
    <property type="gene ID" value="ENSLCAG00010019797.1"/>
</dbReference>
<dbReference type="GeneID" id="108873234"/>
<dbReference type="KEGG" id="lcf:108873234"/>
<dbReference type="CTD" id="2688"/>
<dbReference type="GeneTree" id="ENSGT00950000182818"/>
<dbReference type="InParanoid" id="Q01283"/>
<dbReference type="OrthoDB" id="9925773at2759"/>
<dbReference type="Proteomes" id="UP000314980">
    <property type="component" value="Unassembled WGS sequence"/>
</dbReference>
<dbReference type="Proteomes" id="UP000694890">
    <property type="component" value="Unplaced"/>
</dbReference>
<dbReference type="GO" id="GO:0005615">
    <property type="term" value="C:extracellular space"/>
    <property type="evidence" value="ECO:0007669"/>
    <property type="project" value="InterPro"/>
</dbReference>
<dbReference type="GO" id="GO:0070186">
    <property type="term" value="F:growth hormone activity"/>
    <property type="evidence" value="ECO:0007669"/>
    <property type="project" value="TreeGrafter"/>
</dbReference>
<dbReference type="GO" id="GO:0005131">
    <property type="term" value="F:growth hormone receptor binding"/>
    <property type="evidence" value="ECO:0007669"/>
    <property type="project" value="InterPro"/>
</dbReference>
<dbReference type="GO" id="GO:0046872">
    <property type="term" value="F:metal ion binding"/>
    <property type="evidence" value="ECO:0007669"/>
    <property type="project" value="UniProtKB-KW"/>
</dbReference>
<dbReference type="GO" id="GO:0048513">
    <property type="term" value="P:animal organ development"/>
    <property type="evidence" value="ECO:0007669"/>
    <property type="project" value="TreeGrafter"/>
</dbReference>
<dbReference type="GO" id="GO:0060396">
    <property type="term" value="P:growth hormone receptor signaling pathway"/>
    <property type="evidence" value="ECO:0007669"/>
    <property type="project" value="TreeGrafter"/>
</dbReference>
<dbReference type="GO" id="GO:0045927">
    <property type="term" value="P:positive regulation of growth"/>
    <property type="evidence" value="ECO:0007669"/>
    <property type="project" value="TreeGrafter"/>
</dbReference>
<dbReference type="GO" id="GO:0046427">
    <property type="term" value="P:positive regulation of receptor signaling pathway via JAK-STAT"/>
    <property type="evidence" value="ECO:0007669"/>
    <property type="project" value="TreeGrafter"/>
</dbReference>
<dbReference type="GO" id="GO:0031667">
    <property type="term" value="P:response to nutrient levels"/>
    <property type="evidence" value="ECO:0007669"/>
    <property type="project" value="TreeGrafter"/>
</dbReference>
<dbReference type="CDD" id="cd10285">
    <property type="entry name" value="somatotropin_like"/>
    <property type="match status" value="1"/>
</dbReference>
<dbReference type="FunFam" id="1.20.1250.10:FF:000009">
    <property type="entry name" value="Growth hormone"/>
    <property type="match status" value="1"/>
</dbReference>
<dbReference type="Gene3D" id="1.20.1250.10">
    <property type="match status" value="1"/>
</dbReference>
<dbReference type="InterPro" id="IPR009079">
    <property type="entry name" value="4_helix_cytokine-like_core"/>
</dbReference>
<dbReference type="InterPro" id="IPR034975">
    <property type="entry name" value="Somatotropin"/>
</dbReference>
<dbReference type="InterPro" id="IPR001400">
    <property type="entry name" value="Somatotropin/Prolactin"/>
</dbReference>
<dbReference type="InterPro" id="IPR018116">
    <property type="entry name" value="Somatotropin_CS"/>
</dbReference>
<dbReference type="PANTHER" id="PTHR11417:SF2">
    <property type="entry name" value="SOMATOTROPIN"/>
    <property type="match status" value="1"/>
</dbReference>
<dbReference type="PANTHER" id="PTHR11417">
    <property type="entry name" value="SOMATOTROPIN,PROLACTIN"/>
    <property type="match status" value="1"/>
</dbReference>
<dbReference type="Pfam" id="PF00103">
    <property type="entry name" value="Hormone_1"/>
    <property type="match status" value="1"/>
</dbReference>
<dbReference type="PRINTS" id="PR00836">
    <property type="entry name" value="SOMATOTROPIN"/>
</dbReference>
<dbReference type="SUPFAM" id="SSF47266">
    <property type="entry name" value="4-helical cytokines"/>
    <property type="match status" value="1"/>
</dbReference>
<dbReference type="PROSITE" id="PS00266">
    <property type="entry name" value="SOMATOTROPIN_1"/>
    <property type="match status" value="1"/>
</dbReference>
<dbReference type="PROSITE" id="PS00338">
    <property type="entry name" value="SOMATOTROPIN_2"/>
    <property type="match status" value="1"/>
</dbReference>